<evidence type="ECO:0000255" key="1">
    <source>
        <dbReference type="HAMAP-Rule" id="MF_00568"/>
    </source>
</evidence>
<reference key="1">
    <citation type="journal article" date="2001" name="DNA Res.">
        <title>Complete genomic sequence of the filamentous nitrogen-fixing cyanobacterium Anabaena sp. strain PCC 7120.</title>
        <authorList>
            <person name="Kaneko T."/>
            <person name="Nakamura Y."/>
            <person name="Wolk C.P."/>
            <person name="Kuritz T."/>
            <person name="Sasamoto S."/>
            <person name="Watanabe A."/>
            <person name="Iriguchi M."/>
            <person name="Ishikawa A."/>
            <person name="Kawashima K."/>
            <person name="Kimura T."/>
            <person name="Kishida Y."/>
            <person name="Kohara M."/>
            <person name="Matsumoto M."/>
            <person name="Matsuno A."/>
            <person name="Muraki A."/>
            <person name="Nakazaki N."/>
            <person name="Shimpo S."/>
            <person name="Sugimoto M."/>
            <person name="Takazawa M."/>
            <person name="Yamada M."/>
            <person name="Yasuda M."/>
            <person name="Tabata S."/>
        </authorList>
    </citation>
    <scope>NUCLEOTIDE SEQUENCE [LARGE SCALE GENOMIC DNA]</scope>
    <source>
        <strain>PCC 7120 / SAG 25.82 / UTEX 2576</strain>
    </source>
</reference>
<feature type="chain" id="PRO_0000155780" description="Quinolinate synthase">
    <location>
        <begin position="1"/>
        <end position="324"/>
    </location>
</feature>
<feature type="binding site" evidence="1">
    <location>
        <position position="39"/>
    </location>
    <ligand>
        <name>iminosuccinate</name>
        <dbReference type="ChEBI" id="CHEBI:77875"/>
    </ligand>
</feature>
<feature type="binding site" evidence="1">
    <location>
        <position position="56"/>
    </location>
    <ligand>
        <name>iminosuccinate</name>
        <dbReference type="ChEBI" id="CHEBI:77875"/>
    </ligand>
</feature>
<feature type="binding site" evidence="1">
    <location>
        <position position="101"/>
    </location>
    <ligand>
        <name>[4Fe-4S] cluster</name>
        <dbReference type="ChEBI" id="CHEBI:49883"/>
    </ligand>
</feature>
<feature type="binding site" evidence="1">
    <location>
        <begin position="127"/>
        <end position="129"/>
    </location>
    <ligand>
        <name>iminosuccinate</name>
        <dbReference type="ChEBI" id="CHEBI:77875"/>
    </ligand>
</feature>
<feature type="binding site" evidence="1">
    <location>
        <position position="144"/>
    </location>
    <ligand>
        <name>iminosuccinate</name>
        <dbReference type="ChEBI" id="CHEBI:77875"/>
    </ligand>
</feature>
<feature type="binding site" evidence="1">
    <location>
        <position position="187"/>
    </location>
    <ligand>
        <name>[4Fe-4S] cluster</name>
        <dbReference type="ChEBI" id="CHEBI:49883"/>
    </ligand>
</feature>
<feature type="binding site" evidence="1">
    <location>
        <begin position="213"/>
        <end position="215"/>
    </location>
    <ligand>
        <name>iminosuccinate</name>
        <dbReference type="ChEBI" id="CHEBI:77875"/>
    </ligand>
</feature>
<feature type="binding site" evidence="1">
    <location>
        <position position="230"/>
    </location>
    <ligand>
        <name>iminosuccinate</name>
        <dbReference type="ChEBI" id="CHEBI:77875"/>
    </ligand>
</feature>
<feature type="binding site" evidence="1">
    <location>
        <position position="280"/>
    </location>
    <ligand>
        <name>[4Fe-4S] cluster</name>
        <dbReference type="ChEBI" id="CHEBI:49883"/>
    </ligand>
</feature>
<dbReference type="EC" id="2.5.1.72" evidence="1"/>
<dbReference type="EMBL" id="BA000019">
    <property type="protein sequence ID" value="BAB76372.1"/>
    <property type="molecule type" value="Genomic_DNA"/>
</dbReference>
<dbReference type="PIR" id="AI2389">
    <property type="entry name" value="AI2389"/>
</dbReference>
<dbReference type="RefSeq" id="WP_010998804.1">
    <property type="nucleotide sequence ID" value="NZ_RSCN01000020.1"/>
</dbReference>
<dbReference type="SMR" id="Q8YN94"/>
<dbReference type="STRING" id="103690.gene:10496725"/>
<dbReference type="KEGG" id="ana:all4673"/>
<dbReference type="eggNOG" id="COG0379">
    <property type="taxonomic scope" value="Bacteria"/>
</dbReference>
<dbReference type="OrthoDB" id="9801204at2"/>
<dbReference type="UniPathway" id="UPA00253">
    <property type="reaction ID" value="UER00327"/>
</dbReference>
<dbReference type="Proteomes" id="UP000002483">
    <property type="component" value="Chromosome"/>
</dbReference>
<dbReference type="GO" id="GO:0005829">
    <property type="term" value="C:cytosol"/>
    <property type="evidence" value="ECO:0007669"/>
    <property type="project" value="TreeGrafter"/>
</dbReference>
<dbReference type="GO" id="GO:0051539">
    <property type="term" value="F:4 iron, 4 sulfur cluster binding"/>
    <property type="evidence" value="ECO:0007669"/>
    <property type="project" value="UniProtKB-KW"/>
</dbReference>
<dbReference type="GO" id="GO:0046872">
    <property type="term" value="F:metal ion binding"/>
    <property type="evidence" value="ECO:0007669"/>
    <property type="project" value="UniProtKB-KW"/>
</dbReference>
<dbReference type="GO" id="GO:0008987">
    <property type="term" value="F:quinolinate synthetase A activity"/>
    <property type="evidence" value="ECO:0007669"/>
    <property type="project" value="UniProtKB-UniRule"/>
</dbReference>
<dbReference type="GO" id="GO:0034628">
    <property type="term" value="P:'de novo' NAD biosynthetic process from L-aspartate"/>
    <property type="evidence" value="ECO:0007669"/>
    <property type="project" value="TreeGrafter"/>
</dbReference>
<dbReference type="FunFam" id="3.40.50.10800:FF:000003">
    <property type="entry name" value="Quinolinate synthase A"/>
    <property type="match status" value="1"/>
</dbReference>
<dbReference type="Gene3D" id="3.40.50.10800">
    <property type="entry name" value="NadA-like"/>
    <property type="match status" value="3"/>
</dbReference>
<dbReference type="HAMAP" id="MF_00568">
    <property type="entry name" value="NadA_type2"/>
    <property type="match status" value="1"/>
</dbReference>
<dbReference type="InterPro" id="IPR003473">
    <property type="entry name" value="NadA"/>
</dbReference>
<dbReference type="InterPro" id="IPR036094">
    <property type="entry name" value="NadA_sf"/>
</dbReference>
<dbReference type="InterPro" id="IPR023066">
    <property type="entry name" value="Quinolinate_synth_type2"/>
</dbReference>
<dbReference type="NCBIfam" id="TIGR00550">
    <property type="entry name" value="nadA"/>
    <property type="match status" value="1"/>
</dbReference>
<dbReference type="NCBIfam" id="NF006878">
    <property type="entry name" value="PRK09375.1-2"/>
    <property type="match status" value="1"/>
</dbReference>
<dbReference type="PANTHER" id="PTHR30573:SF0">
    <property type="entry name" value="QUINOLINATE SYNTHASE, CHLOROPLASTIC"/>
    <property type="match status" value="1"/>
</dbReference>
<dbReference type="PANTHER" id="PTHR30573">
    <property type="entry name" value="QUINOLINATE SYNTHETASE A"/>
    <property type="match status" value="1"/>
</dbReference>
<dbReference type="Pfam" id="PF02445">
    <property type="entry name" value="NadA"/>
    <property type="match status" value="1"/>
</dbReference>
<dbReference type="SUPFAM" id="SSF142754">
    <property type="entry name" value="NadA-like"/>
    <property type="match status" value="1"/>
</dbReference>
<organism>
    <name type="scientific">Nostoc sp. (strain PCC 7120 / SAG 25.82 / UTEX 2576)</name>
    <dbReference type="NCBI Taxonomy" id="103690"/>
    <lineage>
        <taxon>Bacteria</taxon>
        <taxon>Bacillati</taxon>
        <taxon>Cyanobacteriota</taxon>
        <taxon>Cyanophyceae</taxon>
        <taxon>Nostocales</taxon>
        <taxon>Nostocaceae</taxon>
        <taxon>Nostoc</taxon>
    </lineage>
</organism>
<gene>
    <name evidence="1" type="primary">nadA</name>
    <name type="ordered locus">all4673</name>
</gene>
<comment type="function">
    <text evidence="1">Catalyzes the condensation of iminoaspartate with dihydroxyacetone phosphate to form quinolinate.</text>
</comment>
<comment type="catalytic activity">
    <reaction evidence="1">
        <text>iminosuccinate + dihydroxyacetone phosphate = quinolinate + phosphate + 2 H2O + H(+)</text>
        <dbReference type="Rhea" id="RHEA:25888"/>
        <dbReference type="ChEBI" id="CHEBI:15377"/>
        <dbReference type="ChEBI" id="CHEBI:15378"/>
        <dbReference type="ChEBI" id="CHEBI:29959"/>
        <dbReference type="ChEBI" id="CHEBI:43474"/>
        <dbReference type="ChEBI" id="CHEBI:57642"/>
        <dbReference type="ChEBI" id="CHEBI:77875"/>
        <dbReference type="EC" id="2.5.1.72"/>
    </reaction>
    <physiologicalReaction direction="left-to-right" evidence="1">
        <dbReference type="Rhea" id="RHEA:25889"/>
    </physiologicalReaction>
</comment>
<comment type="cofactor">
    <cofactor evidence="1">
        <name>[4Fe-4S] cluster</name>
        <dbReference type="ChEBI" id="CHEBI:49883"/>
    </cofactor>
    <text evidence="1">Binds 1 [4Fe-4S] cluster per subunit.</text>
</comment>
<comment type="pathway">
    <text evidence="1">Cofactor biosynthesis; NAD(+) biosynthesis; quinolinate from iminoaspartate: step 1/1.</text>
</comment>
<comment type="subcellular location">
    <subcellularLocation>
        <location evidence="1">Cytoplasm</location>
    </subcellularLocation>
</comment>
<comment type="similarity">
    <text evidence="1">Belongs to the quinolinate synthase family. Type 2 subfamily.</text>
</comment>
<sequence length="324" mass="35901">MFTTAFAQREQTQPGGLPLDLFAAIESLKKELNAVILAHYYQEPDIQDIADFIGDSLQLARAAAQTNADVIVFAGVHFMAETAKILNPEKLVLLPDLNAGCSLADSCPPKEFAAFKAAHPDHLVVSYINCSAEIKAMSDIICTSSNAVKIVQQIPKEQPIIFAPDRNLGRYVMEQTGRDLVLWQGSCLVHETFSEKKIVQLKVAHPQAEAIAHPECESSVLRHASFIGSTAALLQYCQTSPSQEFIVATEPGIIHQMQKLAPNKHFIPAPPINNCACNECPFMRLNTLEKLYWAMKNRTPEITMSEDIRLAALRPMQRMLEMSN</sequence>
<proteinExistence type="inferred from homology"/>
<protein>
    <recommendedName>
        <fullName evidence="1">Quinolinate synthase</fullName>
        <ecNumber evidence="1">2.5.1.72</ecNumber>
    </recommendedName>
</protein>
<accession>Q8YN94</accession>
<keyword id="KW-0004">4Fe-4S</keyword>
<keyword id="KW-0963">Cytoplasm</keyword>
<keyword id="KW-0408">Iron</keyword>
<keyword id="KW-0411">Iron-sulfur</keyword>
<keyword id="KW-0479">Metal-binding</keyword>
<keyword id="KW-0662">Pyridine nucleotide biosynthesis</keyword>
<keyword id="KW-1185">Reference proteome</keyword>
<keyword id="KW-0808">Transferase</keyword>
<name>NADA_NOSS1</name>